<evidence type="ECO:0000255" key="1">
    <source>
        <dbReference type="HAMAP-Rule" id="MF_01039"/>
    </source>
</evidence>
<evidence type="ECO:0000256" key="2">
    <source>
        <dbReference type="SAM" id="MobiDB-lite"/>
    </source>
</evidence>
<comment type="function">
    <text evidence="1">Catalyzes the interconversion of 2-phosphoglycerate and 3-phosphoglycerate.</text>
</comment>
<comment type="catalytic activity">
    <reaction evidence="1">
        <text>(2R)-2-phosphoglycerate = (2R)-3-phosphoglycerate</text>
        <dbReference type="Rhea" id="RHEA:15901"/>
        <dbReference type="ChEBI" id="CHEBI:58272"/>
        <dbReference type="ChEBI" id="CHEBI:58289"/>
        <dbReference type="EC" id="5.4.2.11"/>
    </reaction>
</comment>
<comment type="pathway">
    <text evidence="1">Carbohydrate degradation; glycolysis; pyruvate from D-glyceraldehyde 3-phosphate: step 3/5.</text>
</comment>
<comment type="similarity">
    <text evidence="1">Belongs to the phosphoglycerate mutase family. BPG-dependent PGAM subfamily.</text>
</comment>
<protein>
    <recommendedName>
        <fullName evidence="1">2,3-bisphosphoglycerate-dependent phosphoglycerate mutase</fullName>
        <shortName evidence="1">BPG-dependent PGAM</shortName>
        <shortName evidence="1">PGAM</shortName>
        <shortName evidence="1">Phosphoglyceromutase</shortName>
        <shortName evidence="1">dPGM</shortName>
        <ecNumber evidence="1">5.4.2.11</ecNumber>
    </recommendedName>
</protein>
<dbReference type="EC" id="5.4.2.11" evidence="1"/>
<dbReference type="EMBL" id="AE016958">
    <property type="protein sequence ID" value="AAS06531.1"/>
    <property type="molecule type" value="Genomic_DNA"/>
</dbReference>
<dbReference type="RefSeq" id="WP_003879311.1">
    <property type="nucleotide sequence ID" value="NZ_CP106873.1"/>
</dbReference>
<dbReference type="SMR" id="Q73SU2"/>
<dbReference type="STRING" id="262316.MAP_3981"/>
<dbReference type="KEGG" id="mpa:MAP_3981"/>
<dbReference type="PATRIC" id="fig|262316.17.peg.4234"/>
<dbReference type="eggNOG" id="COG0588">
    <property type="taxonomic scope" value="Bacteria"/>
</dbReference>
<dbReference type="HOGENOM" id="CLU_033323_1_1_11"/>
<dbReference type="UniPathway" id="UPA00109">
    <property type="reaction ID" value="UER00186"/>
</dbReference>
<dbReference type="Proteomes" id="UP000000580">
    <property type="component" value="Chromosome"/>
</dbReference>
<dbReference type="GO" id="GO:0004619">
    <property type="term" value="F:phosphoglycerate mutase activity"/>
    <property type="evidence" value="ECO:0007669"/>
    <property type="project" value="UniProtKB-EC"/>
</dbReference>
<dbReference type="GO" id="GO:0006094">
    <property type="term" value="P:gluconeogenesis"/>
    <property type="evidence" value="ECO:0007669"/>
    <property type="project" value="UniProtKB-UniRule"/>
</dbReference>
<dbReference type="GO" id="GO:0006096">
    <property type="term" value="P:glycolytic process"/>
    <property type="evidence" value="ECO:0007669"/>
    <property type="project" value="UniProtKB-UniRule"/>
</dbReference>
<dbReference type="CDD" id="cd07067">
    <property type="entry name" value="HP_PGM_like"/>
    <property type="match status" value="1"/>
</dbReference>
<dbReference type="FunFam" id="3.40.50.1240:FF:000012">
    <property type="entry name" value="Phosphoglycerate mutase 1"/>
    <property type="match status" value="1"/>
</dbReference>
<dbReference type="Gene3D" id="3.40.50.1240">
    <property type="entry name" value="Phosphoglycerate mutase-like"/>
    <property type="match status" value="1"/>
</dbReference>
<dbReference type="HAMAP" id="MF_01039">
    <property type="entry name" value="PGAM_GpmA"/>
    <property type="match status" value="1"/>
</dbReference>
<dbReference type="InterPro" id="IPR013078">
    <property type="entry name" value="His_Pase_superF_clade-1"/>
</dbReference>
<dbReference type="InterPro" id="IPR029033">
    <property type="entry name" value="His_PPase_superfam"/>
</dbReference>
<dbReference type="InterPro" id="IPR001345">
    <property type="entry name" value="PG/BPGM_mutase_AS"/>
</dbReference>
<dbReference type="InterPro" id="IPR005952">
    <property type="entry name" value="Phosphogly_mut1"/>
</dbReference>
<dbReference type="NCBIfam" id="TIGR01258">
    <property type="entry name" value="pgm_1"/>
    <property type="match status" value="1"/>
</dbReference>
<dbReference type="NCBIfam" id="NF010713">
    <property type="entry name" value="PRK14115.1"/>
    <property type="match status" value="1"/>
</dbReference>
<dbReference type="NCBIfam" id="NF010718">
    <property type="entry name" value="PRK14120.1"/>
    <property type="match status" value="1"/>
</dbReference>
<dbReference type="PANTHER" id="PTHR11931">
    <property type="entry name" value="PHOSPHOGLYCERATE MUTASE"/>
    <property type="match status" value="1"/>
</dbReference>
<dbReference type="Pfam" id="PF00300">
    <property type="entry name" value="His_Phos_1"/>
    <property type="match status" value="1"/>
</dbReference>
<dbReference type="PIRSF" id="PIRSF000709">
    <property type="entry name" value="6PFK_2-Ptase"/>
    <property type="match status" value="1"/>
</dbReference>
<dbReference type="SMART" id="SM00855">
    <property type="entry name" value="PGAM"/>
    <property type="match status" value="1"/>
</dbReference>
<dbReference type="SUPFAM" id="SSF53254">
    <property type="entry name" value="Phosphoglycerate mutase-like"/>
    <property type="match status" value="1"/>
</dbReference>
<dbReference type="PROSITE" id="PS00175">
    <property type="entry name" value="PG_MUTASE"/>
    <property type="match status" value="1"/>
</dbReference>
<sequence length="249" mass="27231">MGETATLVLLRHGESEWNSLNLFTGWVDVGLTDKGRAEAVRSGELLAEQGLLPDALYTSLLRRAITTAHLALDAADRLWIPVRRSWRLNERHYGALQGLDKAETKARYGEEQFMAWRRSYDTPPPPIERGSTYSQDADPRYADIGGGPLTECLADVVVRFLPYFTDVIVPDLRSGKTVLIVAHGNSLRALVKHLDQMSDDDVVGLNIPTGIPLRYDLDARLRPLVPGGTYLDPEAAAAGAAAVASQGRG</sequence>
<reference key="1">
    <citation type="journal article" date="2005" name="Proc. Natl. Acad. Sci. U.S.A.">
        <title>The complete genome sequence of Mycobacterium avium subspecies paratuberculosis.</title>
        <authorList>
            <person name="Li L."/>
            <person name="Bannantine J.P."/>
            <person name="Zhang Q."/>
            <person name="Amonsin A."/>
            <person name="May B.J."/>
            <person name="Alt D."/>
            <person name="Banerji N."/>
            <person name="Kanjilal S."/>
            <person name="Kapur V."/>
        </authorList>
    </citation>
    <scope>NUCLEOTIDE SEQUENCE [LARGE SCALE GENOMIC DNA]</scope>
    <source>
        <strain>ATCC BAA-968 / K-10</strain>
    </source>
</reference>
<gene>
    <name evidence="1" type="primary">gpmA</name>
    <name type="synonym">gpm</name>
    <name type="ordered locus">MAP_3981</name>
</gene>
<accession>Q73SU2</accession>
<organism>
    <name type="scientific">Mycolicibacterium paratuberculosis (strain ATCC BAA-968 / K-10)</name>
    <name type="common">Mycobacterium paratuberculosis</name>
    <dbReference type="NCBI Taxonomy" id="262316"/>
    <lineage>
        <taxon>Bacteria</taxon>
        <taxon>Bacillati</taxon>
        <taxon>Actinomycetota</taxon>
        <taxon>Actinomycetes</taxon>
        <taxon>Mycobacteriales</taxon>
        <taxon>Mycobacteriaceae</taxon>
        <taxon>Mycobacterium</taxon>
        <taxon>Mycobacterium avium complex (MAC)</taxon>
    </lineage>
</organism>
<proteinExistence type="inferred from homology"/>
<feature type="chain" id="PRO_0000179892" description="2,3-bisphosphoglycerate-dependent phosphoglycerate mutase">
    <location>
        <begin position="1"/>
        <end position="249"/>
    </location>
</feature>
<feature type="region of interest" description="Disordered" evidence="2">
    <location>
        <begin position="119"/>
        <end position="138"/>
    </location>
</feature>
<feature type="active site" description="Tele-phosphohistidine intermediate" evidence="1">
    <location>
        <position position="12"/>
    </location>
</feature>
<feature type="active site" description="Proton donor/acceptor" evidence="1">
    <location>
        <position position="90"/>
    </location>
</feature>
<feature type="binding site" evidence="1">
    <location>
        <begin position="11"/>
        <end position="18"/>
    </location>
    <ligand>
        <name>substrate</name>
    </ligand>
</feature>
<feature type="binding site" evidence="1">
    <location>
        <begin position="24"/>
        <end position="25"/>
    </location>
    <ligand>
        <name>substrate</name>
    </ligand>
</feature>
<feature type="binding site" evidence="1">
    <location>
        <position position="63"/>
    </location>
    <ligand>
        <name>substrate</name>
    </ligand>
</feature>
<feature type="binding site" evidence="1">
    <location>
        <begin position="90"/>
        <end position="93"/>
    </location>
    <ligand>
        <name>substrate</name>
    </ligand>
</feature>
<feature type="binding site" evidence="1">
    <location>
        <position position="101"/>
    </location>
    <ligand>
        <name>substrate</name>
    </ligand>
</feature>
<feature type="binding site" evidence="1">
    <location>
        <begin position="117"/>
        <end position="118"/>
    </location>
    <ligand>
        <name>substrate</name>
    </ligand>
</feature>
<feature type="binding site" evidence="1">
    <location>
        <begin position="184"/>
        <end position="185"/>
    </location>
    <ligand>
        <name>substrate</name>
    </ligand>
</feature>
<feature type="site" description="Transition state stabilizer" evidence="1">
    <location>
        <position position="183"/>
    </location>
</feature>
<keyword id="KW-0312">Gluconeogenesis</keyword>
<keyword id="KW-0324">Glycolysis</keyword>
<keyword id="KW-0413">Isomerase</keyword>
<keyword id="KW-1185">Reference proteome</keyword>
<name>GPMA_MYCPA</name>